<keyword id="KW-0067">ATP-binding</keyword>
<keyword id="KW-0963">Cytoplasm</keyword>
<keyword id="KW-0227">DNA damage</keyword>
<keyword id="KW-0228">DNA excision</keyword>
<keyword id="KW-0234">DNA repair</keyword>
<keyword id="KW-0267">Excision nuclease</keyword>
<keyword id="KW-0547">Nucleotide-binding</keyword>
<keyword id="KW-1185">Reference proteome</keyword>
<keyword id="KW-0742">SOS response</keyword>
<name>UVRB_TREDE</name>
<protein>
    <recommendedName>
        <fullName evidence="1">UvrABC system protein B</fullName>
        <shortName evidence="1">Protein UvrB</shortName>
    </recommendedName>
    <alternativeName>
        <fullName evidence="1">Excinuclease ABC subunit B</fullName>
    </alternativeName>
</protein>
<accession>Q73MY7</accession>
<evidence type="ECO:0000255" key="1">
    <source>
        <dbReference type="HAMAP-Rule" id="MF_00204"/>
    </source>
</evidence>
<organism>
    <name type="scientific">Treponema denticola (strain ATCC 35405 / DSM 14222 / CIP 103919 / JCM 8153 / KCTC 15104)</name>
    <dbReference type="NCBI Taxonomy" id="243275"/>
    <lineage>
        <taxon>Bacteria</taxon>
        <taxon>Pseudomonadati</taxon>
        <taxon>Spirochaetota</taxon>
        <taxon>Spirochaetia</taxon>
        <taxon>Spirochaetales</taxon>
        <taxon>Treponemataceae</taxon>
        <taxon>Treponema</taxon>
    </lineage>
</organism>
<comment type="function">
    <text evidence="1">The UvrABC repair system catalyzes the recognition and processing of DNA lesions. A damage recognition complex composed of 2 UvrA and 2 UvrB subunits scans DNA for abnormalities. Upon binding of the UvrA(2)B(2) complex to a putative damaged site, the DNA wraps around one UvrB monomer. DNA wrap is dependent on ATP binding by UvrB and probably causes local melting of the DNA helix, facilitating insertion of UvrB beta-hairpin between the DNA strands. Then UvrB probes one DNA strand for the presence of a lesion. If a lesion is found the UvrA subunits dissociate and the UvrB-DNA preincision complex is formed. This complex is subsequently bound by UvrC and the second UvrB is released. If no lesion is found, the DNA wraps around the other UvrB subunit that will check the other stand for damage.</text>
</comment>
<comment type="subunit">
    <text evidence="1">Forms a heterotetramer with UvrA during the search for lesions. Interacts with UvrC in an incision complex.</text>
</comment>
<comment type="subcellular location">
    <subcellularLocation>
        <location evidence="1">Cytoplasm</location>
    </subcellularLocation>
</comment>
<comment type="domain">
    <text evidence="1">The beta-hairpin motif is involved in DNA binding.</text>
</comment>
<comment type="similarity">
    <text evidence="1">Belongs to the UvrB family.</text>
</comment>
<gene>
    <name evidence="1" type="primary">uvrB</name>
    <name type="ordered locus">TDE_1369</name>
</gene>
<feature type="chain" id="PRO_0000227379" description="UvrABC system protein B">
    <location>
        <begin position="1"/>
        <end position="662"/>
    </location>
</feature>
<feature type="domain" description="Helicase ATP-binding" evidence="1">
    <location>
        <begin position="25"/>
        <end position="411"/>
    </location>
</feature>
<feature type="domain" description="Helicase C-terminal" evidence="1">
    <location>
        <begin position="428"/>
        <end position="594"/>
    </location>
</feature>
<feature type="domain" description="UVR" evidence="1">
    <location>
        <begin position="625"/>
        <end position="660"/>
    </location>
</feature>
<feature type="short sequence motif" description="Beta-hairpin">
    <location>
        <begin position="91"/>
        <end position="114"/>
    </location>
</feature>
<feature type="binding site" evidence="1">
    <location>
        <begin position="38"/>
        <end position="45"/>
    </location>
    <ligand>
        <name>ATP</name>
        <dbReference type="ChEBI" id="CHEBI:30616"/>
    </ligand>
</feature>
<proteinExistence type="inferred from homology"/>
<reference key="1">
    <citation type="journal article" date="2004" name="Proc. Natl. Acad. Sci. U.S.A.">
        <title>Comparison of the genome of the oral pathogen Treponema denticola with other spirochete genomes.</title>
        <authorList>
            <person name="Seshadri R."/>
            <person name="Myers G.S.A."/>
            <person name="Tettelin H."/>
            <person name="Eisen J.A."/>
            <person name="Heidelberg J.F."/>
            <person name="Dodson R.J."/>
            <person name="Davidsen T.M."/>
            <person name="DeBoy R.T."/>
            <person name="Fouts D.E."/>
            <person name="Haft D.H."/>
            <person name="Selengut J."/>
            <person name="Ren Q."/>
            <person name="Brinkac L.M."/>
            <person name="Madupu R."/>
            <person name="Kolonay J.F."/>
            <person name="Durkin S.A."/>
            <person name="Daugherty S.C."/>
            <person name="Shetty J."/>
            <person name="Shvartsbeyn A."/>
            <person name="Gebregeorgis E."/>
            <person name="Geer K."/>
            <person name="Tsegaye G."/>
            <person name="Malek J.A."/>
            <person name="Ayodeji B."/>
            <person name="Shatsman S."/>
            <person name="McLeod M.P."/>
            <person name="Smajs D."/>
            <person name="Howell J.K."/>
            <person name="Pal S."/>
            <person name="Amin A."/>
            <person name="Vashisth P."/>
            <person name="McNeill T.Z."/>
            <person name="Xiang Q."/>
            <person name="Sodergren E."/>
            <person name="Baca E."/>
            <person name="Weinstock G.M."/>
            <person name="Norris S.J."/>
            <person name="Fraser C.M."/>
            <person name="Paulsen I.T."/>
        </authorList>
    </citation>
    <scope>NUCLEOTIDE SEQUENCE [LARGE SCALE GENOMIC DNA]</scope>
    <source>
        <strain>ATCC 35405 / DSM 14222 / CIP 103919 / JCM 8153 / KCTC 15104</strain>
    </source>
</reference>
<dbReference type="EMBL" id="AE017226">
    <property type="protein sequence ID" value="AAS11886.1"/>
    <property type="molecule type" value="Genomic_DNA"/>
</dbReference>
<dbReference type="RefSeq" id="NP_971975.1">
    <property type="nucleotide sequence ID" value="NC_002967.9"/>
</dbReference>
<dbReference type="RefSeq" id="WP_002678935.1">
    <property type="nucleotide sequence ID" value="NC_002967.9"/>
</dbReference>
<dbReference type="SMR" id="Q73MY7"/>
<dbReference type="STRING" id="243275.TDE_1369"/>
<dbReference type="PaxDb" id="243275-TDE_1369"/>
<dbReference type="GeneID" id="2741130"/>
<dbReference type="KEGG" id="tde:TDE_1369"/>
<dbReference type="PATRIC" id="fig|243275.7.peg.1315"/>
<dbReference type="eggNOG" id="COG0556">
    <property type="taxonomic scope" value="Bacteria"/>
</dbReference>
<dbReference type="HOGENOM" id="CLU_009621_2_1_12"/>
<dbReference type="OrthoDB" id="9806651at2"/>
<dbReference type="Proteomes" id="UP000008212">
    <property type="component" value="Chromosome"/>
</dbReference>
<dbReference type="GO" id="GO:0005737">
    <property type="term" value="C:cytoplasm"/>
    <property type="evidence" value="ECO:0007669"/>
    <property type="project" value="UniProtKB-SubCell"/>
</dbReference>
<dbReference type="GO" id="GO:0009380">
    <property type="term" value="C:excinuclease repair complex"/>
    <property type="evidence" value="ECO:0007669"/>
    <property type="project" value="InterPro"/>
</dbReference>
<dbReference type="GO" id="GO:0005524">
    <property type="term" value="F:ATP binding"/>
    <property type="evidence" value="ECO:0007669"/>
    <property type="project" value="UniProtKB-UniRule"/>
</dbReference>
<dbReference type="GO" id="GO:0016887">
    <property type="term" value="F:ATP hydrolysis activity"/>
    <property type="evidence" value="ECO:0007669"/>
    <property type="project" value="InterPro"/>
</dbReference>
<dbReference type="GO" id="GO:0003677">
    <property type="term" value="F:DNA binding"/>
    <property type="evidence" value="ECO:0007669"/>
    <property type="project" value="UniProtKB-UniRule"/>
</dbReference>
<dbReference type="GO" id="GO:0009381">
    <property type="term" value="F:excinuclease ABC activity"/>
    <property type="evidence" value="ECO:0007669"/>
    <property type="project" value="UniProtKB-UniRule"/>
</dbReference>
<dbReference type="GO" id="GO:0006289">
    <property type="term" value="P:nucleotide-excision repair"/>
    <property type="evidence" value="ECO:0007669"/>
    <property type="project" value="UniProtKB-UniRule"/>
</dbReference>
<dbReference type="GO" id="GO:0009432">
    <property type="term" value="P:SOS response"/>
    <property type="evidence" value="ECO:0007669"/>
    <property type="project" value="UniProtKB-UniRule"/>
</dbReference>
<dbReference type="CDD" id="cd17916">
    <property type="entry name" value="DEXHc_UvrB"/>
    <property type="match status" value="1"/>
</dbReference>
<dbReference type="CDD" id="cd18790">
    <property type="entry name" value="SF2_C_UvrB"/>
    <property type="match status" value="1"/>
</dbReference>
<dbReference type="Gene3D" id="3.40.50.300">
    <property type="entry name" value="P-loop containing nucleotide triphosphate hydrolases"/>
    <property type="match status" value="3"/>
</dbReference>
<dbReference type="Gene3D" id="4.10.860.10">
    <property type="entry name" value="UVR domain"/>
    <property type="match status" value="1"/>
</dbReference>
<dbReference type="HAMAP" id="MF_00204">
    <property type="entry name" value="UvrB"/>
    <property type="match status" value="1"/>
</dbReference>
<dbReference type="InterPro" id="IPR006935">
    <property type="entry name" value="Helicase/UvrB_N"/>
</dbReference>
<dbReference type="InterPro" id="IPR014001">
    <property type="entry name" value="Helicase_ATP-bd"/>
</dbReference>
<dbReference type="InterPro" id="IPR001650">
    <property type="entry name" value="Helicase_C-like"/>
</dbReference>
<dbReference type="InterPro" id="IPR027417">
    <property type="entry name" value="P-loop_NTPase"/>
</dbReference>
<dbReference type="InterPro" id="IPR001943">
    <property type="entry name" value="UVR_dom"/>
</dbReference>
<dbReference type="InterPro" id="IPR036876">
    <property type="entry name" value="UVR_dom_sf"/>
</dbReference>
<dbReference type="InterPro" id="IPR004807">
    <property type="entry name" value="UvrB"/>
</dbReference>
<dbReference type="InterPro" id="IPR041471">
    <property type="entry name" value="UvrB_inter"/>
</dbReference>
<dbReference type="InterPro" id="IPR024759">
    <property type="entry name" value="UvrB_YAD/RRR_dom"/>
</dbReference>
<dbReference type="NCBIfam" id="NF003673">
    <property type="entry name" value="PRK05298.1"/>
    <property type="match status" value="1"/>
</dbReference>
<dbReference type="NCBIfam" id="TIGR00631">
    <property type="entry name" value="uvrb"/>
    <property type="match status" value="1"/>
</dbReference>
<dbReference type="PANTHER" id="PTHR24029">
    <property type="entry name" value="UVRABC SYSTEM PROTEIN B"/>
    <property type="match status" value="1"/>
</dbReference>
<dbReference type="PANTHER" id="PTHR24029:SF0">
    <property type="entry name" value="UVRABC SYSTEM PROTEIN B"/>
    <property type="match status" value="1"/>
</dbReference>
<dbReference type="Pfam" id="PF00271">
    <property type="entry name" value="Helicase_C"/>
    <property type="match status" value="1"/>
</dbReference>
<dbReference type="Pfam" id="PF04851">
    <property type="entry name" value="ResIII"/>
    <property type="match status" value="1"/>
</dbReference>
<dbReference type="Pfam" id="PF02151">
    <property type="entry name" value="UVR"/>
    <property type="match status" value="1"/>
</dbReference>
<dbReference type="Pfam" id="PF12344">
    <property type="entry name" value="UvrB"/>
    <property type="match status" value="1"/>
</dbReference>
<dbReference type="Pfam" id="PF17757">
    <property type="entry name" value="UvrB_inter"/>
    <property type="match status" value="1"/>
</dbReference>
<dbReference type="SMART" id="SM00487">
    <property type="entry name" value="DEXDc"/>
    <property type="match status" value="1"/>
</dbReference>
<dbReference type="SMART" id="SM00490">
    <property type="entry name" value="HELICc"/>
    <property type="match status" value="1"/>
</dbReference>
<dbReference type="SUPFAM" id="SSF46600">
    <property type="entry name" value="C-terminal UvrC-binding domain of UvrB"/>
    <property type="match status" value="1"/>
</dbReference>
<dbReference type="SUPFAM" id="SSF52540">
    <property type="entry name" value="P-loop containing nucleoside triphosphate hydrolases"/>
    <property type="match status" value="2"/>
</dbReference>
<dbReference type="PROSITE" id="PS51192">
    <property type="entry name" value="HELICASE_ATP_BIND_1"/>
    <property type="match status" value="1"/>
</dbReference>
<dbReference type="PROSITE" id="PS51194">
    <property type="entry name" value="HELICASE_CTER"/>
    <property type="match status" value="1"/>
</dbReference>
<dbReference type="PROSITE" id="PS50151">
    <property type="entry name" value="UVR"/>
    <property type="match status" value="1"/>
</dbReference>
<sequence length="662" mass="75802">MKQFKLISDYKPSGDQGEAIKALSDGIIAGDKFQTLKGVTGSGKTFTMANIIQAVQKPTLIISHNKTLAAQLYREFKTFFPENAVEYFVSYYDYYQPEAYVPARDLYIEKDASINDEIDRLRLSATFSLMERRDVIVVSTVSCIYGLGLPESWRDLRITIEKGENIEIEKLKKQLISLQYERNDAVLERGRFRVKGDVMEIFPAYMEDAYRLEFDWEEIVRIRKFNPISGEVIQEYEELSIYPAKHFVMPEDAIPNALERIKKELEERLNVLNKEGKLLEAERLKTRTEYDIEMLSEMGYCPGIENYSAPIANRKPGEPPATLFHYFPDDFLLFMDESHVTFPQVGAMYEGDRSRKQNLVDFGFRLPCALDNRPLKIDEFEKMLNQAVFVSATPGPKEIKYSTRIVEQVIRPTGLLDPIIEIHKSEGQMEHIYGEVKKRIALNERSLILTLTKKMAEDLTDYLTGLGLKVKYIHSEVETIERVEILKGLRAGEFDVLIGINLLREGIDLPEVSFIGILDADKIGFLRSTTSLIQIVGRAARNENGKVVMYADRISDAMKETIEETNRRRAIQEAYNKEHGITPKTIKKAIEDILTRENEIKKEAALAEAGPLINSLNILNPADRKKLIKKLEAQMAEYADMLMFEEAAVIRDKIEEVKRIGS</sequence>